<comment type="function">
    <text evidence="1">Plant non-specific lipid-transfer proteins transfer phospholipids as well as galactolipids across membranes. May play a role in wax or cutin deposition in the cell walls of expanding epidermal cells and certain secretory tissues (By similarity).</text>
</comment>
<comment type="similarity">
    <text evidence="3">Belongs to the plant LTP family.</text>
</comment>
<comment type="sequence caution" evidence="3">
    <conflict type="erroneous gene model prediction">
        <sequence resource="EMBL-CDS" id="BAB10168"/>
    </conflict>
</comment>
<name>NLTPE_ARATH</name>
<reference key="1">
    <citation type="journal article" date="1998" name="DNA Res.">
        <title>Structural analysis of Arabidopsis thaliana chromosome 5. VII. Sequence features of the regions of 1,013,767 bp covered by sixteen physically assigned P1 and TAC clones.</title>
        <authorList>
            <person name="Nakamura Y."/>
            <person name="Sato S."/>
            <person name="Asamizu E."/>
            <person name="Kaneko T."/>
            <person name="Kotani H."/>
            <person name="Miyajima N."/>
            <person name="Tabata S."/>
        </authorList>
    </citation>
    <scope>NUCLEOTIDE SEQUENCE [LARGE SCALE GENOMIC DNA]</scope>
    <source>
        <strain>cv. Columbia</strain>
    </source>
</reference>
<reference key="2">
    <citation type="journal article" date="2017" name="Plant J.">
        <title>Araport11: a complete reannotation of the Arabidopsis thaliana reference genome.</title>
        <authorList>
            <person name="Cheng C.Y."/>
            <person name="Krishnakumar V."/>
            <person name="Chan A.P."/>
            <person name="Thibaud-Nissen F."/>
            <person name="Schobel S."/>
            <person name="Town C.D."/>
        </authorList>
    </citation>
    <scope>GENOME REANNOTATION</scope>
    <source>
        <strain>cv. Columbia</strain>
    </source>
</reference>
<reference key="3">
    <citation type="journal article" date="2008" name="Plant Physiol. Biochem.">
        <title>Plant pathogenesis-related (PR) proteins: a focus on PR peptides.</title>
        <authorList>
            <person name="Sels J."/>
            <person name="Mathys J."/>
            <person name="De Coninck B.M.A."/>
            <person name="Cammue B.P.A."/>
            <person name="De Bolle M.F.C."/>
        </authorList>
    </citation>
    <scope>GENE FAMILY</scope>
    <scope>NOMENCLATURE</scope>
</reference>
<keyword id="KW-1015">Disulfide bond</keyword>
<keyword id="KW-0446">Lipid-binding</keyword>
<keyword id="KW-1185">Reference proteome</keyword>
<keyword id="KW-0732">Signal</keyword>
<keyword id="KW-0813">Transport</keyword>
<dbReference type="EMBL" id="AB016880">
    <property type="protein sequence ID" value="BAB10168.1"/>
    <property type="status" value="ALT_SEQ"/>
    <property type="molecule type" value="Genomic_DNA"/>
</dbReference>
<dbReference type="EMBL" id="CP002688">
    <property type="protein sequence ID" value="AED97557.1"/>
    <property type="molecule type" value="Genomic_DNA"/>
</dbReference>
<dbReference type="RefSeq" id="NP_001078780.1">
    <property type="nucleotide sequence ID" value="NM_001085311.2"/>
</dbReference>
<dbReference type="SMR" id="Q9FIT2"/>
<dbReference type="STRING" id="3702.Q9FIT2"/>
<dbReference type="PaxDb" id="3702-AT5G62065.1"/>
<dbReference type="EnsemblPlants" id="AT5G62065.1">
    <property type="protein sequence ID" value="AT5G62065.1"/>
    <property type="gene ID" value="AT5G62065"/>
</dbReference>
<dbReference type="GeneID" id="5008322"/>
<dbReference type="Gramene" id="AT5G62065.1">
    <property type="protein sequence ID" value="AT5G62065.1"/>
    <property type="gene ID" value="AT5G62065"/>
</dbReference>
<dbReference type="KEGG" id="ath:AT5G62065"/>
<dbReference type="Araport" id="AT5G62065"/>
<dbReference type="TAIR" id="AT5G62065"/>
<dbReference type="eggNOG" id="ENOG502S4Y6">
    <property type="taxonomic scope" value="Eukaryota"/>
</dbReference>
<dbReference type="HOGENOM" id="CLU_128423_1_0_1"/>
<dbReference type="InParanoid" id="Q9FIT2"/>
<dbReference type="OMA" id="VCRCLMG"/>
<dbReference type="OrthoDB" id="1919446at2759"/>
<dbReference type="PhylomeDB" id="Q9FIT2"/>
<dbReference type="PRO" id="PR:Q9FIT2"/>
<dbReference type="Proteomes" id="UP000006548">
    <property type="component" value="Chromosome 5"/>
</dbReference>
<dbReference type="ExpressionAtlas" id="Q9FIT2">
    <property type="expression patterns" value="baseline and differential"/>
</dbReference>
<dbReference type="GO" id="GO:0008289">
    <property type="term" value="F:lipid binding"/>
    <property type="evidence" value="ECO:0007669"/>
    <property type="project" value="UniProtKB-KW"/>
</dbReference>
<dbReference type="GO" id="GO:0006869">
    <property type="term" value="P:lipid transport"/>
    <property type="evidence" value="ECO:0007669"/>
    <property type="project" value="InterPro"/>
</dbReference>
<dbReference type="CDD" id="cd01960">
    <property type="entry name" value="nsLTP1"/>
    <property type="match status" value="1"/>
</dbReference>
<dbReference type="Gene3D" id="1.10.110.10">
    <property type="entry name" value="Plant lipid-transfer and hydrophobic proteins"/>
    <property type="match status" value="1"/>
</dbReference>
<dbReference type="InterPro" id="IPR036312">
    <property type="entry name" value="Bifun_inhib/LTP/seed_sf"/>
</dbReference>
<dbReference type="InterPro" id="IPR016140">
    <property type="entry name" value="Bifunc_inhib/LTP/seed_store"/>
</dbReference>
<dbReference type="InterPro" id="IPR000528">
    <property type="entry name" value="Plant_nsLTP"/>
</dbReference>
<dbReference type="PANTHER" id="PTHR33076">
    <property type="entry name" value="NON-SPECIFIC LIPID-TRANSFER PROTEIN 2-RELATED"/>
    <property type="match status" value="1"/>
</dbReference>
<dbReference type="Pfam" id="PF14368">
    <property type="entry name" value="LTP_2"/>
    <property type="match status" value="1"/>
</dbReference>
<dbReference type="PRINTS" id="PR00382">
    <property type="entry name" value="LIPIDTRNSFER"/>
</dbReference>
<dbReference type="SUPFAM" id="SSF47699">
    <property type="entry name" value="Bifunctional inhibitor/lipid-transfer protein/seed storage 2S albumin"/>
    <property type="match status" value="1"/>
</dbReference>
<gene>
    <name type="primary">LTP14</name>
    <name type="ordered locus">At5g62065</name>
    <name type="ORF">MTG10</name>
</gene>
<protein>
    <recommendedName>
        <fullName>Putative non-specific lipid-transfer protein 14</fullName>
        <shortName>LTP 14</shortName>
    </recommendedName>
</protein>
<evidence type="ECO:0000250" key="1"/>
<evidence type="ECO:0000255" key="2"/>
<evidence type="ECO:0000305" key="3"/>
<feature type="signal peptide" evidence="2">
    <location>
        <begin position="1"/>
        <end position="22"/>
    </location>
</feature>
<feature type="chain" id="PRO_0000355624" description="Putative non-specific lipid-transfer protein 14">
    <location>
        <begin position="23"/>
        <end position="120"/>
    </location>
</feature>
<feature type="disulfide bond" evidence="2">
    <location>
        <begin position="30"/>
        <end position="80"/>
    </location>
</feature>
<feature type="disulfide bond" evidence="2">
    <location>
        <begin position="40"/>
        <end position="57"/>
    </location>
</feature>
<feature type="disulfide bond" evidence="2">
    <location>
        <begin position="58"/>
        <end position="102"/>
    </location>
</feature>
<feature type="disulfide bond" evidence="2">
    <location>
        <begin position="78"/>
        <end position="116"/>
    </location>
</feature>
<organism>
    <name type="scientific">Arabidopsis thaliana</name>
    <name type="common">Mouse-ear cress</name>
    <dbReference type="NCBI Taxonomy" id="3702"/>
    <lineage>
        <taxon>Eukaryota</taxon>
        <taxon>Viridiplantae</taxon>
        <taxon>Streptophyta</taxon>
        <taxon>Embryophyta</taxon>
        <taxon>Tracheophyta</taxon>
        <taxon>Spermatophyta</taxon>
        <taxon>Magnoliopsida</taxon>
        <taxon>eudicotyledons</taxon>
        <taxon>Gunneridae</taxon>
        <taxon>Pentapetalae</taxon>
        <taxon>rosids</taxon>
        <taxon>malvids</taxon>
        <taxon>Brassicales</taxon>
        <taxon>Brassicaceae</taxon>
        <taxon>Camelineae</taxon>
        <taxon>Arabidopsis</taxon>
    </lineage>
</organism>
<accession>Q9FIT2</accession>
<sequence length="120" mass="12854">MTRSFSPVVSLFLLLLQTICSATVENAADCAAVGTLISSCTEFVNYGYPDPIPGSSCCDAMTVIGTYSDSSEKRKWLCNCFMDLINVYNSNATAISTLSGFCGVVLGFTIDPNTDCNFIQ</sequence>
<proteinExistence type="inferred from homology"/>